<comment type="catalytic activity">
    <reaction evidence="1">
        <text>alpha-D-xylose = alpha-D-xylulofuranose</text>
        <dbReference type="Rhea" id="RHEA:22816"/>
        <dbReference type="ChEBI" id="CHEBI:28518"/>
        <dbReference type="ChEBI" id="CHEBI:188998"/>
        <dbReference type="EC" id="5.3.1.5"/>
    </reaction>
</comment>
<comment type="cofactor">
    <cofactor evidence="1">
        <name>Mg(2+)</name>
        <dbReference type="ChEBI" id="CHEBI:18420"/>
    </cofactor>
    <text evidence="1">Binds 2 magnesium ions per subunit.</text>
</comment>
<comment type="subunit">
    <text evidence="1">Homotetramer.</text>
</comment>
<comment type="subcellular location">
    <subcellularLocation>
        <location evidence="1">Cytoplasm</location>
    </subcellularLocation>
</comment>
<comment type="similarity">
    <text evidence="1">Belongs to the xylose isomerase family.</text>
</comment>
<accession>Q9K993</accession>
<reference key="1">
    <citation type="journal article" date="2000" name="Nucleic Acids Res.">
        <title>Complete genome sequence of the alkaliphilic bacterium Bacillus halodurans and genomic sequence comparison with Bacillus subtilis.</title>
        <authorList>
            <person name="Takami H."/>
            <person name="Nakasone K."/>
            <person name="Takaki Y."/>
            <person name="Maeno G."/>
            <person name="Sasaki R."/>
            <person name="Masui N."/>
            <person name="Fuji F."/>
            <person name="Hirama C."/>
            <person name="Nakamura Y."/>
            <person name="Ogasawara N."/>
            <person name="Kuhara S."/>
            <person name="Horikoshi K."/>
        </authorList>
    </citation>
    <scope>NUCLEOTIDE SEQUENCE [LARGE SCALE GENOMIC DNA]</scope>
    <source>
        <strain>ATCC BAA-125 / DSM 18197 / FERM 7344 / JCM 9153 / C-125</strain>
    </source>
</reference>
<organism>
    <name type="scientific">Halalkalibacterium halodurans (strain ATCC BAA-125 / DSM 18197 / FERM 7344 / JCM 9153 / C-125)</name>
    <name type="common">Bacillus halodurans</name>
    <dbReference type="NCBI Taxonomy" id="272558"/>
    <lineage>
        <taxon>Bacteria</taxon>
        <taxon>Bacillati</taxon>
        <taxon>Bacillota</taxon>
        <taxon>Bacilli</taxon>
        <taxon>Bacillales</taxon>
        <taxon>Bacillaceae</taxon>
        <taxon>Halalkalibacterium (ex Joshi et al. 2022)</taxon>
    </lineage>
</organism>
<keyword id="KW-0119">Carbohydrate metabolism</keyword>
<keyword id="KW-0963">Cytoplasm</keyword>
<keyword id="KW-0413">Isomerase</keyword>
<keyword id="KW-0460">Magnesium</keyword>
<keyword id="KW-0479">Metal-binding</keyword>
<keyword id="KW-1185">Reference proteome</keyword>
<keyword id="KW-0859">Xylose metabolism</keyword>
<proteinExistence type="inferred from homology"/>
<protein>
    <recommendedName>
        <fullName evidence="1">Xylose isomerase</fullName>
        <ecNumber evidence="1">5.3.1.5</ecNumber>
    </recommendedName>
</protein>
<evidence type="ECO:0000255" key="1">
    <source>
        <dbReference type="HAMAP-Rule" id="MF_00455"/>
    </source>
</evidence>
<name>XYLA_HALH5</name>
<feature type="chain" id="PRO_0000195762" description="Xylose isomerase">
    <location>
        <begin position="1"/>
        <end position="440"/>
    </location>
</feature>
<feature type="active site" evidence="1">
    <location>
        <position position="99"/>
    </location>
</feature>
<feature type="active site" evidence="1">
    <location>
        <position position="102"/>
    </location>
</feature>
<feature type="binding site" evidence="1">
    <location>
        <position position="230"/>
    </location>
    <ligand>
        <name>Mg(2+)</name>
        <dbReference type="ChEBI" id="CHEBI:18420"/>
        <label>1</label>
    </ligand>
</feature>
<feature type="binding site" evidence="1">
    <location>
        <position position="266"/>
    </location>
    <ligand>
        <name>Mg(2+)</name>
        <dbReference type="ChEBI" id="CHEBI:18420"/>
        <label>1</label>
    </ligand>
</feature>
<feature type="binding site" evidence="1">
    <location>
        <position position="266"/>
    </location>
    <ligand>
        <name>Mg(2+)</name>
        <dbReference type="ChEBI" id="CHEBI:18420"/>
        <label>2</label>
    </ligand>
</feature>
<feature type="binding site" evidence="1">
    <location>
        <position position="269"/>
    </location>
    <ligand>
        <name>Mg(2+)</name>
        <dbReference type="ChEBI" id="CHEBI:18420"/>
        <label>2</label>
    </ligand>
</feature>
<feature type="binding site" evidence="1">
    <location>
        <position position="294"/>
    </location>
    <ligand>
        <name>Mg(2+)</name>
        <dbReference type="ChEBI" id="CHEBI:18420"/>
        <label>1</label>
    </ligand>
</feature>
<feature type="binding site" evidence="1">
    <location>
        <position position="305"/>
    </location>
    <ligand>
        <name>Mg(2+)</name>
        <dbReference type="ChEBI" id="CHEBI:18420"/>
        <label>2</label>
    </ligand>
</feature>
<feature type="binding site" evidence="1">
    <location>
        <position position="307"/>
    </location>
    <ligand>
        <name>Mg(2+)</name>
        <dbReference type="ChEBI" id="CHEBI:18420"/>
        <label>2</label>
    </ligand>
</feature>
<feature type="binding site" evidence="1">
    <location>
        <position position="337"/>
    </location>
    <ligand>
        <name>Mg(2+)</name>
        <dbReference type="ChEBI" id="CHEBI:18420"/>
        <label>1</label>
    </ligand>
</feature>
<sequence>MTFFNDVEKVQYEGPRSTNPYAFKYYNPEEIVAGKTMAEHLRFSIAYWHTFVGDGSDPFGVGTMQRPWDQYSGMDLAKARVEAAFEFFEKLNVPYFCFHDVDVAPEGETLADTYKNLDEIVLMIKDYMKTSKTKLLWNTANMFTHPRWIHGAATSPNADVYAYAAAKVKKGLEIGKELGAENYVFWGGREGYETLLNTNMKLELDNLARFFHMAVDYAKEIGFDAQFLIEPKPKEPTKHQYDFDVATGIAFLKTHGLDEHFKFNIEANHATLAGHTFEHELHLARIHDMLGSVDANQGDTLLGWDTDEFPTDLYTTTLAMYEILKNDGLGKGGLNFDAKVRRGSFEANDLFHAHIAGMDSFAIGLKVANQLLEDRVLEDVIDNRYKSYQSGIGQKIANNDTNLKELEAYALSLGEIKHSSGQQERIKATLNQYLLRVNEY</sequence>
<gene>
    <name evidence="1" type="primary">xylA</name>
    <name type="ordered locus">BH2757</name>
</gene>
<dbReference type="EC" id="5.3.1.5" evidence="1"/>
<dbReference type="EMBL" id="BA000004">
    <property type="protein sequence ID" value="BAB06476.1"/>
    <property type="molecule type" value="Genomic_DNA"/>
</dbReference>
<dbReference type="PIR" id="E83994">
    <property type="entry name" value="E83994"/>
</dbReference>
<dbReference type="RefSeq" id="WP_010898905.1">
    <property type="nucleotide sequence ID" value="NC_002570.2"/>
</dbReference>
<dbReference type="SMR" id="Q9K993"/>
<dbReference type="STRING" id="272558.gene:10728657"/>
<dbReference type="KEGG" id="bha:BH2757"/>
<dbReference type="eggNOG" id="COG2115">
    <property type="taxonomic scope" value="Bacteria"/>
</dbReference>
<dbReference type="HOGENOM" id="CLU_037261_1_0_9"/>
<dbReference type="OrthoDB" id="9763981at2"/>
<dbReference type="Proteomes" id="UP000001258">
    <property type="component" value="Chromosome"/>
</dbReference>
<dbReference type="GO" id="GO:0005737">
    <property type="term" value="C:cytoplasm"/>
    <property type="evidence" value="ECO:0007669"/>
    <property type="project" value="UniProtKB-SubCell"/>
</dbReference>
<dbReference type="GO" id="GO:0000287">
    <property type="term" value="F:magnesium ion binding"/>
    <property type="evidence" value="ECO:0007669"/>
    <property type="project" value="UniProtKB-UniRule"/>
</dbReference>
<dbReference type="GO" id="GO:0009045">
    <property type="term" value="F:xylose isomerase activity"/>
    <property type="evidence" value="ECO:0007669"/>
    <property type="project" value="UniProtKB-UniRule"/>
</dbReference>
<dbReference type="GO" id="GO:0042732">
    <property type="term" value="P:D-xylose metabolic process"/>
    <property type="evidence" value="ECO:0007669"/>
    <property type="project" value="UniProtKB-UniRule"/>
</dbReference>
<dbReference type="FunFam" id="3.20.20.150:FF:000002">
    <property type="entry name" value="Xylose isomerase"/>
    <property type="match status" value="1"/>
</dbReference>
<dbReference type="Gene3D" id="3.20.20.150">
    <property type="entry name" value="Divalent-metal-dependent TIM barrel enzymes"/>
    <property type="match status" value="1"/>
</dbReference>
<dbReference type="HAMAP" id="MF_00455">
    <property type="entry name" value="Xylose_isom_A"/>
    <property type="match status" value="1"/>
</dbReference>
<dbReference type="InterPro" id="IPR036237">
    <property type="entry name" value="Xyl_isomerase-like_sf"/>
</dbReference>
<dbReference type="InterPro" id="IPR013452">
    <property type="entry name" value="Xylose_isom_bac"/>
</dbReference>
<dbReference type="InterPro" id="IPR001998">
    <property type="entry name" value="Xylose_isomerase"/>
</dbReference>
<dbReference type="NCBIfam" id="NF003998">
    <property type="entry name" value="PRK05474.1"/>
    <property type="match status" value="1"/>
</dbReference>
<dbReference type="NCBIfam" id="TIGR02630">
    <property type="entry name" value="xylose_isom_A"/>
    <property type="match status" value="1"/>
</dbReference>
<dbReference type="PANTHER" id="PTHR48408">
    <property type="match status" value="1"/>
</dbReference>
<dbReference type="PANTHER" id="PTHR48408:SF1">
    <property type="entry name" value="XYLOSE ISOMERASE"/>
    <property type="match status" value="1"/>
</dbReference>
<dbReference type="PRINTS" id="PR00688">
    <property type="entry name" value="XYLOSISMRASE"/>
</dbReference>
<dbReference type="SUPFAM" id="SSF51658">
    <property type="entry name" value="Xylose isomerase-like"/>
    <property type="match status" value="1"/>
</dbReference>
<dbReference type="PROSITE" id="PS51415">
    <property type="entry name" value="XYLOSE_ISOMERASE"/>
    <property type="match status" value="1"/>
</dbReference>